<reference key="1">
    <citation type="submission" date="2004-10" db="EMBL/GenBank/DDBJ databases">
        <authorList>
            <consortium name="NIH - Zebrafish Gene Collection (ZGC) project"/>
        </authorList>
    </citation>
    <scope>NUCLEOTIDE SEQUENCE [LARGE SCALE MRNA]</scope>
    <source>
        <strain>SJD</strain>
    </source>
</reference>
<proteinExistence type="evidence at transcript level"/>
<organism>
    <name type="scientific">Danio rerio</name>
    <name type="common">Zebrafish</name>
    <name type="synonym">Brachydanio rerio</name>
    <dbReference type="NCBI Taxonomy" id="7955"/>
    <lineage>
        <taxon>Eukaryota</taxon>
        <taxon>Metazoa</taxon>
        <taxon>Chordata</taxon>
        <taxon>Craniata</taxon>
        <taxon>Vertebrata</taxon>
        <taxon>Euteleostomi</taxon>
        <taxon>Actinopterygii</taxon>
        <taxon>Neopterygii</taxon>
        <taxon>Teleostei</taxon>
        <taxon>Ostariophysi</taxon>
        <taxon>Cypriniformes</taxon>
        <taxon>Danionidae</taxon>
        <taxon>Danioninae</taxon>
        <taxon>Danio</taxon>
    </lineage>
</organism>
<comment type="function">
    <text evidence="1">Involved in DNA damage response. May function as transcriptional cofactor in TGF beta signaling. Accentuates Smad2-dependent transcription (By similarity).</text>
</comment>
<comment type="subunit">
    <text evidence="1">Interacts with smad2 via its last three BRCT domain-containing regions in an activin signal-dependent manner.</text>
</comment>
<comment type="subcellular location">
    <subcellularLocation>
        <location evidence="1">Nucleus</location>
    </subcellularLocation>
</comment>
<gene>
    <name type="primary">paxip1</name>
    <name type="ORF">zgc:92593</name>
</gene>
<evidence type="ECO:0000250" key="1"/>
<evidence type="ECO:0000255" key="2"/>
<evidence type="ECO:0000255" key="3">
    <source>
        <dbReference type="PROSITE-ProRule" id="PRU00033"/>
    </source>
</evidence>
<evidence type="ECO:0000256" key="4">
    <source>
        <dbReference type="SAM" id="MobiDB-lite"/>
    </source>
</evidence>
<keyword id="KW-0227">DNA damage</keyword>
<keyword id="KW-0234">DNA repair</keyword>
<keyword id="KW-0539">Nucleus</keyword>
<keyword id="KW-1185">Reference proteome</keyword>
<keyword id="KW-0677">Repeat</keyword>
<keyword id="KW-0804">Transcription</keyword>
<keyword id="KW-0805">Transcription regulation</keyword>
<accession>Q5XIY8</accession>
<name>PAXI1_DANRE</name>
<dbReference type="EMBL" id="BC083530">
    <property type="protein sequence ID" value="AAH83530.1"/>
    <property type="molecule type" value="mRNA"/>
</dbReference>
<dbReference type="SMR" id="Q5XIY8"/>
<dbReference type="FunCoup" id="Q5XIY8">
    <property type="interactions" value="974"/>
</dbReference>
<dbReference type="STRING" id="7955.ENSDARP00000113779"/>
<dbReference type="PaxDb" id="7955-ENSDARP00000113779"/>
<dbReference type="PeptideAtlas" id="Q5XIY8"/>
<dbReference type="AGR" id="ZFIN:ZDB-GENE-041010-214"/>
<dbReference type="ZFIN" id="ZDB-GENE-041010-214">
    <property type="gene designation" value="paxip1"/>
</dbReference>
<dbReference type="eggNOG" id="KOG2043">
    <property type="taxonomic scope" value="Eukaryota"/>
</dbReference>
<dbReference type="InParanoid" id="Q5XIY8"/>
<dbReference type="Reactome" id="R-DRE-9772755">
    <property type="pathway name" value="Formation of WDR5-containing histone-modifying complexes"/>
</dbReference>
<dbReference type="Reactome" id="R-DRE-9818564">
    <property type="pathway name" value="Epigenetic regulation of gene expression by MLL3 and MLL4 complexes"/>
</dbReference>
<dbReference type="PRO" id="PR:Q5XIY8"/>
<dbReference type="Proteomes" id="UP000000437">
    <property type="component" value="Unplaced"/>
</dbReference>
<dbReference type="GO" id="GO:0005634">
    <property type="term" value="C:nucleus"/>
    <property type="evidence" value="ECO:0007669"/>
    <property type="project" value="UniProtKB-SubCell"/>
</dbReference>
<dbReference type="GO" id="GO:0006281">
    <property type="term" value="P:DNA repair"/>
    <property type="evidence" value="ECO:0007669"/>
    <property type="project" value="UniProtKB-KW"/>
</dbReference>
<dbReference type="CDD" id="cd17714">
    <property type="entry name" value="BRCT_PAXIP1_rpt1"/>
    <property type="match status" value="1"/>
</dbReference>
<dbReference type="CDD" id="cd17710">
    <property type="entry name" value="BRCT_PAXIP1_rpt2"/>
    <property type="match status" value="1"/>
</dbReference>
<dbReference type="CDD" id="cd17711">
    <property type="entry name" value="BRCT_PAXIP1_rpt3"/>
    <property type="match status" value="1"/>
</dbReference>
<dbReference type="CDD" id="cd17730">
    <property type="entry name" value="BRCT_PAXIP1_rpt4"/>
    <property type="match status" value="1"/>
</dbReference>
<dbReference type="FunFam" id="3.40.50.10190:FF:000046">
    <property type="entry name" value="PAX interacting protein 1"/>
    <property type="match status" value="1"/>
</dbReference>
<dbReference type="Gene3D" id="3.40.50.10190">
    <property type="entry name" value="BRCT domain"/>
    <property type="match status" value="4"/>
</dbReference>
<dbReference type="InterPro" id="IPR001357">
    <property type="entry name" value="BRCT_dom"/>
</dbReference>
<dbReference type="InterPro" id="IPR036420">
    <property type="entry name" value="BRCT_dom_sf"/>
</dbReference>
<dbReference type="InterPro" id="IPR051579">
    <property type="entry name" value="DDR_Transcriptional_Reg"/>
</dbReference>
<dbReference type="PANTHER" id="PTHR23196">
    <property type="entry name" value="PAX TRANSCRIPTION ACTIVATION DOMAIN INTERACTING PROTEIN"/>
    <property type="match status" value="1"/>
</dbReference>
<dbReference type="PANTHER" id="PTHR23196:SF1">
    <property type="entry name" value="PAX-INTERACTING PROTEIN 1"/>
    <property type="match status" value="1"/>
</dbReference>
<dbReference type="Pfam" id="PF00533">
    <property type="entry name" value="BRCT"/>
    <property type="match status" value="1"/>
</dbReference>
<dbReference type="Pfam" id="PF12738">
    <property type="entry name" value="PTCB-BRCT"/>
    <property type="match status" value="2"/>
</dbReference>
<dbReference type="SMART" id="SM00292">
    <property type="entry name" value="BRCT"/>
    <property type="match status" value="4"/>
</dbReference>
<dbReference type="SUPFAM" id="SSF52113">
    <property type="entry name" value="BRCT domain"/>
    <property type="match status" value="4"/>
</dbReference>
<dbReference type="PROSITE" id="PS50172">
    <property type="entry name" value="BRCT"/>
    <property type="match status" value="4"/>
</dbReference>
<protein>
    <recommendedName>
        <fullName>PAX-interacting protein 1</fullName>
    </recommendedName>
    <alternativeName>
        <fullName>PAX transactivation activation domain-interacting protein</fullName>
    </alternativeName>
</protein>
<feature type="chain" id="PRO_0000296264" description="PAX-interacting protein 1">
    <location>
        <begin position="1"/>
        <end position="943"/>
    </location>
</feature>
<feature type="domain" description="BRCT 1" evidence="3">
    <location>
        <begin position="8"/>
        <end position="93"/>
    </location>
</feature>
<feature type="domain" description="BRCT 2" evidence="3">
    <location>
        <begin position="94"/>
        <end position="182"/>
    </location>
</feature>
<feature type="domain" description="BRCT 3" evidence="3">
    <location>
        <begin position="664"/>
        <end position="756"/>
    </location>
</feature>
<feature type="domain" description="BRCT 4" evidence="3">
    <location>
        <begin position="763"/>
        <end position="851"/>
    </location>
</feature>
<feature type="region of interest" description="Disordered" evidence="4">
    <location>
        <begin position="190"/>
        <end position="281"/>
    </location>
</feature>
<feature type="region of interest" description="Disordered" evidence="4">
    <location>
        <begin position="400"/>
        <end position="507"/>
    </location>
</feature>
<feature type="region of interest" description="Disordered" evidence="4">
    <location>
        <begin position="620"/>
        <end position="641"/>
    </location>
</feature>
<feature type="short sequence motif" description="Nuclear localization signal" evidence="2">
    <location>
        <begin position="730"/>
        <end position="747"/>
    </location>
</feature>
<feature type="compositionally biased region" description="Basic and acidic residues" evidence="4">
    <location>
        <begin position="198"/>
        <end position="214"/>
    </location>
</feature>
<feature type="compositionally biased region" description="Low complexity" evidence="4">
    <location>
        <begin position="220"/>
        <end position="230"/>
    </location>
</feature>
<feature type="compositionally biased region" description="Low complexity" evidence="4">
    <location>
        <begin position="620"/>
        <end position="635"/>
    </location>
</feature>
<sequence>MSEDDLKVPEELFKDVKFYVVGDIDQKVVQLLKSGKGKEVSYNALATHIIAEDGDNPEVGESREVFDLPVVKPSWVILSVKCGDLLPVTGFSPESGQVFFGVTACLPHLAEDLNALWAFITFYGGDCQLHFNKKCTHLVVPEPKGAKYECALRHNNIKIVTPEWILDSVKEKNRKDEMLYHPRLTLYDAPEEEGSEYENERSSRSEGSYSDRRSPHSRRSSPTSSRDASPAGRRSPSTKHERKSELMFDDSDDSSPEKEDRNLNWTPAEVLPPGPAKRRLQPGKETGLINLCANVPPVPGSFGPPDARMVGAGAGAGGGVPMGVERLEVMSEWNSAARTLRNITNNTDTQQPSRPSNVAHIIQSFSASSKGVVDHMGNQGQSGIPNQLLLKAQQQLPPEAQQQLLQQQQQQSHQLQQQQQQHQMAQQHPMMLPQVMQMHHHQQQQQHQPPPQQQQQQQNQQGFPQMPPQSHQFLQQQMHQQMYSQHQQQQQQQQQQQQQHAFPQQMRPQQLPRLPLQHQQQHVLQQQLQLQQQHRLQLQLQQQQQQQQQQQQQQQQQQQQQQQQQQQQQQQQKQQQQQQQNQQQMHQQYLQQQQHFLQQQLQQQHMQQLQQQQQMQQQQQQHLQNQQPLQHQNQQVNPHQTQTMLQPPITSAQLFGHEPGHDIPEEGFLVGCIFAIADYPEQMADKQLLATWKRIIQLNGGTVDSALNRCTHLLCESQVSNTYLQALREGKRCVTAHWLNTVLKKKKMVPPHRTLHLPFSFPPGAKPCAQHIISVTGFVDSDRDDLKLMAYLAGARYTGYLCRSNTVLICKEPSGLKYEKAKEWRIPCVNAQWLCDILLGNFEALRQIQHSKYTQFNLPDPLAPNHHLVHNLLSAWRIPVKISPEALASLRLQLKQKQADVSVQPPSKRPKLEELPTPTKSFHLIQHLTSFSQALNLCRLSST</sequence>